<sequence length="155" mass="17245">MSEQNNTEMAFQIQRIYTKDVSFEAPNAPHVFQKDWQPEVKLDLDTASSQLADDVYEVVLRVTVTASLGEETAFLCEVQQAGIFSISGIEGTQMAHCLGAYCPNILFPYARECITSLVSRGTFPQLNLAPVNFDALFMNYLQQQAGEGTEEHQDA</sequence>
<proteinExistence type="inferred from homology"/>
<accession>B5EXB6</accession>
<feature type="chain" id="PRO_1000195339" description="Protein-export protein SecB">
    <location>
        <begin position="1"/>
        <end position="155"/>
    </location>
</feature>
<keyword id="KW-0143">Chaperone</keyword>
<keyword id="KW-0963">Cytoplasm</keyword>
<keyword id="KW-0653">Protein transport</keyword>
<keyword id="KW-0811">Translocation</keyword>
<keyword id="KW-0813">Transport</keyword>
<name>SECB_SALA4</name>
<protein>
    <recommendedName>
        <fullName evidence="1">Protein-export protein SecB</fullName>
    </recommendedName>
</protein>
<dbReference type="EMBL" id="CP001138">
    <property type="protein sequence ID" value="ACH51195.1"/>
    <property type="molecule type" value="Genomic_DNA"/>
</dbReference>
<dbReference type="RefSeq" id="WP_000003370.1">
    <property type="nucleotide sequence ID" value="NC_011149.1"/>
</dbReference>
<dbReference type="SMR" id="B5EXB6"/>
<dbReference type="KEGG" id="sea:SeAg_B3919"/>
<dbReference type="HOGENOM" id="CLU_111574_1_0_6"/>
<dbReference type="Proteomes" id="UP000008819">
    <property type="component" value="Chromosome"/>
</dbReference>
<dbReference type="GO" id="GO:0005737">
    <property type="term" value="C:cytoplasm"/>
    <property type="evidence" value="ECO:0007669"/>
    <property type="project" value="UniProtKB-SubCell"/>
</dbReference>
<dbReference type="GO" id="GO:0051082">
    <property type="term" value="F:unfolded protein binding"/>
    <property type="evidence" value="ECO:0007669"/>
    <property type="project" value="InterPro"/>
</dbReference>
<dbReference type="GO" id="GO:0006457">
    <property type="term" value="P:protein folding"/>
    <property type="evidence" value="ECO:0007669"/>
    <property type="project" value="UniProtKB-UniRule"/>
</dbReference>
<dbReference type="GO" id="GO:0051262">
    <property type="term" value="P:protein tetramerization"/>
    <property type="evidence" value="ECO:0007669"/>
    <property type="project" value="InterPro"/>
</dbReference>
<dbReference type="GO" id="GO:0015031">
    <property type="term" value="P:protein transport"/>
    <property type="evidence" value="ECO:0007669"/>
    <property type="project" value="UniProtKB-UniRule"/>
</dbReference>
<dbReference type="CDD" id="cd00557">
    <property type="entry name" value="Translocase_SecB"/>
    <property type="match status" value="1"/>
</dbReference>
<dbReference type="FunFam" id="3.10.420.10:FF:000001">
    <property type="entry name" value="Protein-export chaperone SecB"/>
    <property type="match status" value="1"/>
</dbReference>
<dbReference type="Gene3D" id="3.10.420.10">
    <property type="entry name" value="SecB-like"/>
    <property type="match status" value="1"/>
</dbReference>
<dbReference type="HAMAP" id="MF_00821">
    <property type="entry name" value="SecB"/>
    <property type="match status" value="1"/>
</dbReference>
<dbReference type="InterPro" id="IPR003708">
    <property type="entry name" value="SecB"/>
</dbReference>
<dbReference type="InterPro" id="IPR035958">
    <property type="entry name" value="SecB-like_sf"/>
</dbReference>
<dbReference type="NCBIfam" id="NF004390">
    <property type="entry name" value="PRK05751.1-1"/>
    <property type="match status" value="1"/>
</dbReference>
<dbReference type="NCBIfam" id="NF004393">
    <property type="entry name" value="PRK05751.1-4"/>
    <property type="match status" value="1"/>
</dbReference>
<dbReference type="NCBIfam" id="TIGR00809">
    <property type="entry name" value="secB"/>
    <property type="match status" value="1"/>
</dbReference>
<dbReference type="PANTHER" id="PTHR36918">
    <property type="match status" value="1"/>
</dbReference>
<dbReference type="PANTHER" id="PTHR36918:SF1">
    <property type="entry name" value="PROTEIN-EXPORT PROTEIN SECB"/>
    <property type="match status" value="1"/>
</dbReference>
<dbReference type="Pfam" id="PF02556">
    <property type="entry name" value="SecB"/>
    <property type="match status" value="1"/>
</dbReference>
<dbReference type="PRINTS" id="PR01594">
    <property type="entry name" value="SECBCHAPRONE"/>
</dbReference>
<dbReference type="SUPFAM" id="SSF54611">
    <property type="entry name" value="SecB-like"/>
    <property type="match status" value="1"/>
</dbReference>
<comment type="function">
    <text evidence="1">One of the proteins required for the normal export of preproteins out of the cell cytoplasm. It is a molecular chaperone that binds to a subset of precursor proteins, maintaining them in a translocation-competent state. It also specifically binds to its receptor SecA.</text>
</comment>
<comment type="subunit">
    <text evidence="1">Homotetramer, a dimer of dimers. One homotetramer interacts with 1 SecA dimer.</text>
</comment>
<comment type="subcellular location">
    <subcellularLocation>
        <location evidence="1">Cytoplasm</location>
    </subcellularLocation>
</comment>
<comment type="similarity">
    <text evidence="1">Belongs to the SecB family.</text>
</comment>
<reference key="1">
    <citation type="journal article" date="2011" name="J. Bacteriol.">
        <title>Comparative genomics of 28 Salmonella enterica isolates: evidence for CRISPR-mediated adaptive sublineage evolution.</title>
        <authorList>
            <person name="Fricke W.F."/>
            <person name="Mammel M.K."/>
            <person name="McDermott P.F."/>
            <person name="Tartera C."/>
            <person name="White D.G."/>
            <person name="Leclerc J.E."/>
            <person name="Ravel J."/>
            <person name="Cebula T.A."/>
        </authorList>
    </citation>
    <scope>NUCLEOTIDE SEQUENCE [LARGE SCALE GENOMIC DNA]</scope>
    <source>
        <strain>SL483</strain>
    </source>
</reference>
<organism>
    <name type="scientific">Salmonella agona (strain SL483)</name>
    <dbReference type="NCBI Taxonomy" id="454166"/>
    <lineage>
        <taxon>Bacteria</taxon>
        <taxon>Pseudomonadati</taxon>
        <taxon>Pseudomonadota</taxon>
        <taxon>Gammaproteobacteria</taxon>
        <taxon>Enterobacterales</taxon>
        <taxon>Enterobacteriaceae</taxon>
        <taxon>Salmonella</taxon>
    </lineage>
</organism>
<gene>
    <name evidence="1" type="primary">secB</name>
    <name type="ordered locus">SeAg_B3919</name>
</gene>
<evidence type="ECO:0000255" key="1">
    <source>
        <dbReference type="HAMAP-Rule" id="MF_00821"/>
    </source>
</evidence>